<keyword id="KW-1185">Reference proteome</keyword>
<feature type="chain" id="PRO_0000152314" description="Sugar fermentation stimulation protein homolog">
    <location>
        <begin position="1"/>
        <end position="229"/>
    </location>
</feature>
<accession>Q8R7N6</accession>
<protein>
    <recommendedName>
        <fullName evidence="1">Sugar fermentation stimulation protein homolog</fullName>
    </recommendedName>
</protein>
<sequence>MIIKNPIIKGKFIERLNRFEAYVEIDGIKTLVHVPNTGRLKEILVKGADVLLEVREKKGRKTPYELAFAYKGKRLISIDSQVPNKVFLESIKKGIVEEFRGYELVEKEKSFGNSKFDIKLTNGKEICYIEVKGVTLEVDGVAKFPDAPTERGRKHLKELIKVKEEGMRAAVVFLIQMDDIKYFTPNDEQDPQFGQFLREAFTKGVEVYAYTCDVGENFINLKNRVQVVL</sequence>
<comment type="similarity">
    <text evidence="1">Belongs to the SfsA family.</text>
</comment>
<dbReference type="EMBL" id="AE008691">
    <property type="protein sequence ID" value="AAM25506.1"/>
    <property type="molecule type" value="Genomic_DNA"/>
</dbReference>
<dbReference type="RefSeq" id="WP_011026405.1">
    <property type="nucleotide sequence ID" value="NC_003869.1"/>
</dbReference>
<dbReference type="SMR" id="Q8R7N6"/>
<dbReference type="STRING" id="273068.TTE2367"/>
<dbReference type="KEGG" id="tte:TTE2367"/>
<dbReference type="eggNOG" id="COG1489">
    <property type="taxonomic scope" value="Bacteria"/>
</dbReference>
<dbReference type="HOGENOM" id="CLU_052299_1_0_9"/>
<dbReference type="OrthoDB" id="9802365at2"/>
<dbReference type="Proteomes" id="UP000000555">
    <property type="component" value="Chromosome"/>
</dbReference>
<dbReference type="GO" id="GO:0003677">
    <property type="term" value="F:DNA binding"/>
    <property type="evidence" value="ECO:0007669"/>
    <property type="project" value="InterPro"/>
</dbReference>
<dbReference type="CDD" id="cd22359">
    <property type="entry name" value="SfsA-like_bacterial"/>
    <property type="match status" value="1"/>
</dbReference>
<dbReference type="FunFam" id="2.40.50.580:FF:000002">
    <property type="entry name" value="Sugar fermentation stimulation protein homolog"/>
    <property type="match status" value="1"/>
</dbReference>
<dbReference type="Gene3D" id="2.40.50.580">
    <property type="match status" value="1"/>
</dbReference>
<dbReference type="Gene3D" id="3.40.1350.60">
    <property type="match status" value="1"/>
</dbReference>
<dbReference type="HAMAP" id="MF_00095">
    <property type="entry name" value="SfsA"/>
    <property type="match status" value="1"/>
</dbReference>
<dbReference type="InterPro" id="IPR005224">
    <property type="entry name" value="SfsA"/>
</dbReference>
<dbReference type="InterPro" id="IPR040452">
    <property type="entry name" value="SfsA_C"/>
</dbReference>
<dbReference type="InterPro" id="IPR041465">
    <property type="entry name" value="SfsA_N"/>
</dbReference>
<dbReference type="NCBIfam" id="TIGR00230">
    <property type="entry name" value="sfsA"/>
    <property type="match status" value="1"/>
</dbReference>
<dbReference type="PANTHER" id="PTHR30545">
    <property type="entry name" value="SUGAR FERMENTATION STIMULATION PROTEIN A"/>
    <property type="match status" value="1"/>
</dbReference>
<dbReference type="PANTHER" id="PTHR30545:SF2">
    <property type="entry name" value="SUGAR FERMENTATION STIMULATION PROTEIN A"/>
    <property type="match status" value="1"/>
</dbReference>
<dbReference type="Pfam" id="PF03749">
    <property type="entry name" value="SfsA"/>
    <property type="match status" value="1"/>
</dbReference>
<dbReference type="Pfam" id="PF17746">
    <property type="entry name" value="SfsA_N"/>
    <property type="match status" value="1"/>
</dbReference>
<proteinExistence type="inferred from homology"/>
<reference key="1">
    <citation type="journal article" date="2002" name="Genome Res.">
        <title>A complete sequence of the T. tengcongensis genome.</title>
        <authorList>
            <person name="Bao Q."/>
            <person name="Tian Y."/>
            <person name="Li W."/>
            <person name="Xu Z."/>
            <person name="Xuan Z."/>
            <person name="Hu S."/>
            <person name="Dong W."/>
            <person name="Yang J."/>
            <person name="Chen Y."/>
            <person name="Xue Y."/>
            <person name="Xu Y."/>
            <person name="Lai X."/>
            <person name="Huang L."/>
            <person name="Dong X."/>
            <person name="Ma Y."/>
            <person name="Ling L."/>
            <person name="Tan H."/>
            <person name="Chen R."/>
            <person name="Wang J."/>
            <person name="Yu J."/>
            <person name="Yang H."/>
        </authorList>
    </citation>
    <scope>NUCLEOTIDE SEQUENCE [LARGE SCALE GENOMIC DNA]</scope>
    <source>
        <strain>DSM 15242 / JCM 11007 / NBRC 100824 / MB4</strain>
    </source>
</reference>
<name>SFSA_CALS4</name>
<gene>
    <name evidence="1" type="primary">sfsA</name>
    <name type="ordered locus">TTE2367</name>
</gene>
<evidence type="ECO:0000255" key="1">
    <source>
        <dbReference type="HAMAP-Rule" id="MF_00095"/>
    </source>
</evidence>
<organism>
    <name type="scientific">Caldanaerobacter subterraneus subsp. tengcongensis (strain DSM 15242 / JCM 11007 / NBRC 100824 / MB4)</name>
    <name type="common">Thermoanaerobacter tengcongensis</name>
    <dbReference type="NCBI Taxonomy" id="273068"/>
    <lineage>
        <taxon>Bacteria</taxon>
        <taxon>Bacillati</taxon>
        <taxon>Bacillota</taxon>
        <taxon>Clostridia</taxon>
        <taxon>Thermoanaerobacterales</taxon>
        <taxon>Thermoanaerobacteraceae</taxon>
        <taxon>Caldanaerobacter</taxon>
    </lineage>
</organism>